<sequence length="97" mass="10902">MKEKHQIVIWPVYLDANKARNEGRLTPMSCSVKTPRVMEIFKAAEKLGLHPEHVTGKAHPAAWADKSGYVLVDNIGPKTDLLRRIGTEIIRMRGGKQ</sequence>
<accession>Q0W2Z9</accession>
<comment type="function">
    <text evidence="1">Involved in targeting and insertion of nascent membrane proteins into the cytoplasmic membrane. Binds directly to 7S RNA and mediates binding of the 54 kDa subunit of the SRP.</text>
</comment>
<comment type="subunit">
    <text evidence="1">Part of the signal recognition particle protein translocation system, which is composed of SRP and FtsY. Archaeal SRP consists of a 7S RNA molecule of 300 nucleotides and two protein subunits: SRP54 and SRP19.</text>
</comment>
<comment type="subcellular location">
    <subcellularLocation>
        <location evidence="1">Cytoplasm</location>
    </subcellularLocation>
</comment>
<comment type="similarity">
    <text evidence="1">Belongs to the SRP19 family.</text>
</comment>
<organism>
    <name type="scientific">Methanocella arvoryzae (strain DSM 22066 / NBRC 105507 / MRE50)</name>
    <dbReference type="NCBI Taxonomy" id="351160"/>
    <lineage>
        <taxon>Archaea</taxon>
        <taxon>Methanobacteriati</taxon>
        <taxon>Methanobacteriota</taxon>
        <taxon>Stenosarchaea group</taxon>
        <taxon>Methanomicrobia</taxon>
        <taxon>Methanocellales</taxon>
        <taxon>Methanocellaceae</taxon>
        <taxon>Methanocella</taxon>
    </lineage>
</organism>
<evidence type="ECO:0000255" key="1">
    <source>
        <dbReference type="HAMAP-Rule" id="MF_00305"/>
    </source>
</evidence>
<protein>
    <recommendedName>
        <fullName evidence="1">Signal recognition particle 19 kDa protein</fullName>
        <shortName evidence="1">SRP19</shortName>
    </recommendedName>
</protein>
<dbReference type="EMBL" id="AM114193">
    <property type="protein sequence ID" value="CAJ37244.1"/>
    <property type="molecule type" value="Genomic_DNA"/>
</dbReference>
<dbReference type="SMR" id="Q0W2Z9"/>
<dbReference type="STRING" id="351160.RCIX2112"/>
<dbReference type="KEGG" id="rci:RCIX2112"/>
<dbReference type="eggNOG" id="arCOG01217">
    <property type="taxonomic scope" value="Archaea"/>
</dbReference>
<dbReference type="OrthoDB" id="56356at2157"/>
<dbReference type="Proteomes" id="UP000000663">
    <property type="component" value="Chromosome"/>
</dbReference>
<dbReference type="GO" id="GO:0048500">
    <property type="term" value="C:signal recognition particle"/>
    <property type="evidence" value="ECO:0007669"/>
    <property type="project" value="UniProtKB-UniRule"/>
</dbReference>
<dbReference type="GO" id="GO:0008312">
    <property type="term" value="F:7S RNA binding"/>
    <property type="evidence" value="ECO:0007669"/>
    <property type="project" value="UniProtKB-UniRule"/>
</dbReference>
<dbReference type="GO" id="GO:0006614">
    <property type="term" value="P:SRP-dependent cotranslational protein targeting to membrane"/>
    <property type="evidence" value="ECO:0007669"/>
    <property type="project" value="InterPro"/>
</dbReference>
<dbReference type="Gene3D" id="3.30.56.30">
    <property type="entry name" value="Signal recognition particle, SRP19-like subunit"/>
    <property type="match status" value="1"/>
</dbReference>
<dbReference type="HAMAP" id="MF_00305">
    <property type="entry name" value="SRP19"/>
    <property type="match status" value="1"/>
</dbReference>
<dbReference type="InterPro" id="IPR002778">
    <property type="entry name" value="Signal_recog_particle_SRP19"/>
</dbReference>
<dbReference type="InterPro" id="IPR036521">
    <property type="entry name" value="SRP19-like_sf"/>
</dbReference>
<dbReference type="InterPro" id="IPR022938">
    <property type="entry name" value="SRP19_arc-type"/>
</dbReference>
<dbReference type="Pfam" id="PF01922">
    <property type="entry name" value="SRP19"/>
    <property type="match status" value="1"/>
</dbReference>
<dbReference type="SUPFAM" id="SSF69695">
    <property type="entry name" value="SRP19"/>
    <property type="match status" value="1"/>
</dbReference>
<keyword id="KW-0963">Cytoplasm</keyword>
<keyword id="KW-1185">Reference proteome</keyword>
<keyword id="KW-0687">Ribonucleoprotein</keyword>
<keyword id="KW-0694">RNA-binding</keyword>
<keyword id="KW-0733">Signal recognition particle</keyword>
<proteinExistence type="inferred from homology"/>
<feature type="chain" id="PRO_0000322232" description="Signal recognition particle 19 kDa protein">
    <location>
        <begin position="1"/>
        <end position="97"/>
    </location>
</feature>
<gene>
    <name evidence="1" type="primary">srp19</name>
    <name type="ordered locus">UNCMA_10030</name>
    <name type="ORF">RCIX2112</name>
</gene>
<name>SRP19_METAR</name>
<reference key="1">
    <citation type="journal article" date="2006" name="Science">
        <title>Genome of rice cluster I archaea -- the key methane producers in the rice rhizosphere.</title>
        <authorList>
            <person name="Erkel C."/>
            <person name="Kube M."/>
            <person name="Reinhardt R."/>
            <person name="Liesack W."/>
        </authorList>
    </citation>
    <scope>NUCLEOTIDE SEQUENCE [LARGE SCALE GENOMIC DNA]</scope>
    <source>
        <strain>DSM 22066 / NBRC 105507 / MRE50</strain>
    </source>
</reference>